<accession>Q32FD5</accession>
<name>PDXH_SHIDS</name>
<comment type="function">
    <text evidence="1">Catalyzes the oxidation of either pyridoxine 5'-phosphate (PNP) or pyridoxamine 5'-phosphate (PMP) into pyridoxal 5'-phosphate (PLP).</text>
</comment>
<comment type="catalytic activity">
    <reaction evidence="1">
        <text>pyridoxamine 5'-phosphate + O2 + H2O = pyridoxal 5'-phosphate + H2O2 + NH4(+)</text>
        <dbReference type="Rhea" id="RHEA:15817"/>
        <dbReference type="ChEBI" id="CHEBI:15377"/>
        <dbReference type="ChEBI" id="CHEBI:15379"/>
        <dbReference type="ChEBI" id="CHEBI:16240"/>
        <dbReference type="ChEBI" id="CHEBI:28938"/>
        <dbReference type="ChEBI" id="CHEBI:58451"/>
        <dbReference type="ChEBI" id="CHEBI:597326"/>
        <dbReference type="EC" id="1.4.3.5"/>
    </reaction>
</comment>
<comment type="catalytic activity">
    <reaction evidence="1">
        <text>pyridoxine 5'-phosphate + O2 = pyridoxal 5'-phosphate + H2O2</text>
        <dbReference type="Rhea" id="RHEA:15149"/>
        <dbReference type="ChEBI" id="CHEBI:15379"/>
        <dbReference type="ChEBI" id="CHEBI:16240"/>
        <dbReference type="ChEBI" id="CHEBI:58589"/>
        <dbReference type="ChEBI" id="CHEBI:597326"/>
        <dbReference type="EC" id="1.4.3.5"/>
    </reaction>
</comment>
<comment type="cofactor">
    <cofactor evidence="1">
        <name>FMN</name>
        <dbReference type="ChEBI" id="CHEBI:58210"/>
    </cofactor>
    <text evidence="1">Binds 1 FMN per subunit.</text>
</comment>
<comment type="pathway">
    <text evidence="1">Cofactor metabolism; pyridoxal 5'-phosphate salvage; pyridoxal 5'-phosphate from pyridoxamine 5'-phosphate: step 1/1.</text>
</comment>
<comment type="pathway">
    <text evidence="1">Cofactor metabolism; pyridoxal 5'-phosphate salvage; pyridoxal 5'-phosphate from pyridoxine 5'-phosphate: step 1/1.</text>
</comment>
<comment type="subunit">
    <text evidence="1">Homodimer.</text>
</comment>
<comment type="similarity">
    <text evidence="1">Belongs to the pyridoxamine 5'-phosphate oxidase family.</text>
</comment>
<reference key="1">
    <citation type="journal article" date="2005" name="Nucleic Acids Res.">
        <title>Genome dynamics and diversity of Shigella species, the etiologic agents of bacillary dysentery.</title>
        <authorList>
            <person name="Yang F."/>
            <person name="Yang J."/>
            <person name="Zhang X."/>
            <person name="Chen L."/>
            <person name="Jiang Y."/>
            <person name="Yan Y."/>
            <person name="Tang X."/>
            <person name="Wang J."/>
            <person name="Xiong Z."/>
            <person name="Dong J."/>
            <person name="Xue Y."/>
            <person name="Zhu Y."/>
            <person name="Xu X."/>
            <person name="Sun L."/>
            <person name="Chen S."/>
            <person name="Nie H."/>
            <person name="Peng J."/>
            <person name="Xu J."/>
            <person name="Wang Y."/>
            <person name="Yuan Z."/>
            <person name="Wen Y."/>
            <person name="Yao Z."/>
            <person name="Shen Y."/>
            <person name="Qiang B."/>
            <person name="Hou Y."/>
            <person name="Yu J."/>
            <person name="Jin Q."/>
        </authorList>
    </citation>
    <scope>NUCLEOTIDE SEQUENCE [LARGE SCALE GENOMIC DNA]</scope>
    <source>
        <strain>Sd197</strain>
    </source>
</reference>
<evidence type="ECO:0000255" key="1">
    <source>
        <dbReference type="HAMAP-Rule" id="MF_01629"/>
    </source>
</evidence>
<protein>
    <recommendedName>
        <fullName evidence="1">Pyridoxine/pyridoxamine 5'-phosphate oxidase</fullName>
        <ecNumber evidence="1">1.4.3.5</ecNumber>
    </recommendedName>
    <alternativeName>
        <fullName evidence="1">PNP/PMP oxidase</fullName>
        <shortName evidence="1">PNPOx</shortName>
    </alternativeName>
    <alternativeName>
        <fullName evidence="1">Pyridoxal 5'-phosphate synthase</fullName>
    </alternativeName>
</protein>
<keyword id="KW-0285">Flavoprotein</keyword>
<keyword id="KW-0288">FMN</keyword>
<keyword id="KW-0560">Oxidoreductase</keyword>
<keyword id="KW-0664">Pyridoxine biosynthesis</keyword>
<keyword id="KW-1185">Reference proteome</keyword>
<sequence length="218" mass="25545">MSDNDELQQIAHLRREYTKGGLRRRDLPADPLTLFERWLSQACEAKLADPTAMVVATVDEHGQPYQRIVLLKHYDEKGMVFYTNLGSRKAHQIENNPRVSLLFPWHTLERQVMVIGKAERLSTLEVMKYFHSRPRDSQIGAWVSKQSSRISARGILESKFLELKQKFQQGEVPLPSFWGGFRVSLEQIEFWQGGEHRLHDRFLYQRENDAWKIDRLAP</sequence>
<dbReference type="EC" id="1.4.3.5" evidence="1"/>
<dbReference type="EMBL" id="CP000034">
    <property type="protein sequence ID" value="ABB61970.1"/>
    <property type="molecule type" value="Genomic_DNA"/>
</dbReference>
<dbReference type="RefSeq" id="WP_001282319.1">
    <property type="nucleotide sequence ID" value="NC_007606.1"/>
</dbReference>
<dbReference type="RefSeq" id="YP_403461.1">
    <property type="nucleotide sequence ID" value="NC_007606.1"/>
</dbReference>
<dbReference type="SMR" id="Q32FD5"/>
<dbReference type="STRING" id="300267.SDY_1861"/>
<dbReference type="EnsemblBacteria" id="ABB61970">
    <property type="protein sequence ID" value="ABB61970"/>
    <property type="gene ID" value="SDY_1861"/>
</dbReference>
<dbReference type="GeneID" id="75171699"/>
<dbReference type="KEGG" id="sdy:SDY_1861"/>
<dbReference type="PATRIC" id="fig|300267.13.peg.2240"/>
<dbReference type="HOGENOM" id="CLU_032263_2_2_6"/>
<dbReference type="UniPathway" id="UPA01068">
    <property type="reaction ID" value="UER00304"/>
</dbReference>
<dbReference type="UniPathway" id="UPA01068">
    <property type="reaction ID" value="UER00305"/>
</dbReference>
<dbReference type="Proteomes" id="UP000002716">
    <property type="component" value="Chromosome"/>
</dbReference>
<dbReference type="GO" id="GO:0010181">
    <property type="term" value="F:FMN binding"/>
    <property type="evidence" value="ECO:0007669"/>
    <property type="project" value="UniProtKB-UniRule"/>
</dbReference>
<dbReference type="GO" id="GO:0004733">
    <property type="term" value="F:pyridoxamine phosphate oxidase activity"/>
    <property type="evidence" value="ECO:0007669"/>
    <property type="project" value="UniProtKB-UniRule"/>
</dbReference>
<dbReference type="GO" id="GO:0008615">
    <property type="term" value="P:pyridoxine biosynthetic process"/>
    <property type="evidence" value="ECO:0007669"/>
    <property type="project" value="UniProtKB-KW"/>
</dbReference>
<dbReference type="FunFam" id="2.30.110.10:FF:000001">
    <property type="entry name" value="Pyridoxine/pyridoxamine 5'-phosphate oxidase"/>
    <property type="match status" value="1"/>
</dbReference>
<dbReference type="Gene3D" id="2.30.110.10">
    <property type="entry name" value="Electron Transport, Fmn-binding Protein, Chain A"/>
    <property type="match status" value="1"/>
</dbReference>
<dbReference type="HAMAP" id="MF_01629">
    <property type="entry name" value="PdxH"/>
    <property type="match status" value="1"/>
</dbReference>
<dbReference type="InterPro" id="IPR000659">
    <property type="entry name" value="Pyridox_Oxase"/>
</dbReference>
<dbReference type="InterPro" id="IPR019740">
    <property type="entry name" value="Pyridox_Oxase_CS"/>
</dbReference>
<dbReference type="InterPro" id="IPR011576">
    <property type="entry name" value="Pyridox_Oxase_N"/>
</dbReference>
<dbReference type="InterPro" id="IPR019576">
    <property type="entry name" value="Pyridoxamine_oxidase_dimer_C"/>
</dbReference>
<dbReference type="InterPro" id="IPR012349">
    <property type="entry name" value="Split_barrel_FMN-bd"/>
</dbReference>
<dbReference type="NCBIfam" id="TIGR00558">
    <property type="entry name" value="pdxH"/>
    <property type="match status" value="1"/>
</dbReference>
<dbReference type="NCBIfam" id="NF004231">
    <property type="entry name" value="PRK05679.1"/>
    <property type="match status" value="1"/>
</dbReference>
<dbReference type="PANTHER" id="PTHR10851:SF0">
    <property type="entry name" value="PYRIDOXINE-5'-PHOSPHATE OXIDASE"/>
    <property type="match status" value="1"/>
</dbReference>
<dbReference type="PANTHER" id="PTHR10851">
    <property type="entry name" value="PYRIDOXINE-5-PHOSPHATE OXIDASE"/>
    <property type="match status" value="1"/>
</dbReference>
<dbReference type="Pfam" id="PF10590">
    <property type="entry name" value="PNP_phzG_C"/>
    <property type="match status" value="1"/>
</dbReference>
<dbReference type="Pfam" id="PF01243">
    <property type="entry name" value="PNPOx_N"/>
    <property type="match status" value="1"/>
</dbReference>
<dbReference type="PIRSF" id="PIRSF000190">
    <property type="entry name" value="Pyd_amn-ph_oxd"/>
    <property type="match status" value="1"/>
</dbReference>
<dbReference type="SUPFAM" id="SSF50475">
    <property type="entry name" value="FMN-binding split barrel"/>
    <property type="match status" value="1"/>
</dbReference>
<dbReference type="PROSITE" id="PS01064">
    <property type="entry name" value="PYRIDOX_OXIDASE"/>
    <property type="match status" value="1"/>
</dbReference>
<organism>
    <name type="scientific">Shigella dysenteriae serotype 1 (strain Sd197)</name>
    <dbReference type="NCBI Taxonomy" id="300267"/>
    <lineage>
        <taxon>Bacteria</taxon>
        <taxon>Pseudomonadati</taxon>
        <taxon>Pseudomonadota</taxon>
        <taxon>Gammaproteobacteria</taxon>
        <taxon>Enterobacterales</taxon>
        <taxon>Enterobacteriaceae</taxon>
        <taxon>Shigella</taxon>
    </lineage>
</organism>
<proteinExistence type="inferred from homology"/>
<feature type="chain" id="PRO_0000167756" description="Pyridoxine/pyridoxamine 5'-phosphate oxidase">
    <location>
        <begin position="1"/>
        <end position="218"/>
    </location>
</feature>
<feature type="binding site" evidence="1">
    <location>
        <begin position="14"/>
        <end position="17"/>
    </location>
    <ligand>
        <name>substrate</name>
    </ligand>
</feature>
<feature type="binding site" evidence="1">
    <location>
        <begin position="67"/>
        <end position="72"/>
    </location>
    <ligand>
        <name>FMN</name>
        <dbReference type="ChEBI" id="CHEBI:58210"/>
    </ligand>
</feature>
<feature type="binding site" evidence="1">
    <location>
        <position position="72"/>
    </location>
    <ligand>
        <name>substrate</name>
    </ligand>
</feature>
<feature type="binding site" evidence="1">
    <location>
        <begin position="82"/>
        <end position="83"/>
    </location>
    <ligand>
        <name>FMN</name>
        <dbReference type="ChEBI" id="CHEBI:58210"/>
    </ligand>
</feature>
<feature type="binding site" evidence="1">
    <location>
        <position position="88"/>
    </location>
    <ligand>
        <name>FMN</name>
        <dbReference type="ChEBI" id="CHEBI:58210"/>
    </ligand>
</feature>
<feature type="binding site" evidence="1">
    <location>
        <position position="89"/>
    </location>
    <ligand>
        <name>FMN</name>
        <dbReference type="ChEBI" id="CHEBI:58210"/>
    </ligand>
</feature>
<feature type="binding site" evidence="1">
    <location>
        <position position="111"/>
    </location>
    <ligand>
        <name>FMN</name>
        <dbReference type="ChEBI" id="CHEBI:58210"/>
    </ligand>
</feature>
<feature type="binding site" evidence="1">
    <location>
        <position position="129"/>
    </location>
    <ligand>
        <name>substrate</name>
    </ligand>
</feature>
<feature type="binding site" evidence="1">
    <location>
        <position position="133"/>
    </location>
    <ligand>
        <name>substrate</name>
    </ligand>
</feature>
<feature type="binding site" evidence="1">
    <location>
        <position position="137"/>
    </location>
    <ligand>
        <name>substrate</name>
    </ligand>
</feature>
<feature type="binding site" evidence="1">
    <location>
        <begin position="146"/>
        <end position="147"/>
    </location>
    <ligand>
        <name>FMN</name>
        <dbReference type="ChEBI" id="CHEBI:58210"/>
    </ligand>
</feature>
<feature type="binding site" evidence="1">
    <location>
        <position position="191"/>
    </location>
    <ligand>
        <name>FMN</name>
        <dbReference type="ChEBI" id="CHEBI:58210"/>
    </ligand>
</feature>
<feature type="binding site" evidence="1">
    <location>
        <begin position="197"/>
        <end position="199"/>
    </location>
    <ligand>
        <name>substrate</name>
    </ligand>
</feature>
<feature type="binding site" evidence="1">
    <location>
        <position position="201"/>
    </location>
    <ligand>
        <name>FMN</name>
        <dbReference type="ChEBI" id="CHEBI:58210"/>
    </ligand>
</feature>
<gene>
    <name evidence="1" type="primary">pdxH</name>
    <name type="ordered locus">SDY_1861</name>
</gene>